<evidence type="ECO:0000250" key="1">
    <source>
        <dbReference type="UniProtKB" id="P00426"/>
    </source>
</evidence>
<evidence type="ECO:0000250" key="2">
    <source>
        <dbReference type="UniProtKB" id="P00427"/>
    </source>
</evidence>
<evidence type="ECO:0000250" key="3">
    <source>
        <dbReference type="UniProtKB" id="P12787"/>
    </source>
</evidence>
<evidence type="ECO:0000250" key="4">
    <source>
        <dbReference type="UniProtKB" id="P20674"/>
    </source>
</evidence>
<evidence type="ECO:0000305" key="5"/>
<protein>
    <recommendedName>
        <fullName>Cytochrome c oxidase subunit 5A, mitochondrial</fullName>
    </recommendedName>
    <alternativeName>
        <fullName>Cytochrome c oxidase polypeptide Va</fullName>
    </alternativeName>
</protein>
<feature type="transit peptide" description="Mitochondrion" evidence="1">
    <location>
        <begin position="1"/>
        <end position="41"/>
    </location>
</feature>
<feature type="chain" id="PRO_0000355976" description="Cytochrome c oxidase subunit 5A, mitochondrial">
    <location>
        <begin position="42"/>
        <end position="150"/>
    </location>
</feature>
<feature type="short sequence motif" description="SIFI-degron" evidence="4">
    <location>
        <begin position="2"/>
        <end position="17"/>
    </location>
</feature>
<feature type="modified residue" description="N6-acetyllysine" evidence="3">
    <location>
        <position position="87"/>
    </location>
</feature>
<feature type="modified residue" description="N6-acetyllysine" evidence="3">
    <location>
        <position position="113"/>
    </location>
</feature>
<feature type="modified residue" description="Phosphothreonine" evidence="4">
    <location>
        <position position="141"/>
    </location>
</feature>
<accession>B0VYY1</accession>
<comment type="function">
    <text evidence="2">Component of the cytochrome c oxidase, the last enzyme in the mitochondrial electron transport chain which drives oxidative phosphorylation. The respiratory chain contains 3 multisubunit complexes succinate dehydrogenase (complex II, CII), ubiquinol-cytochrome c oxidoreductase (cytochrome b-c1 complex, complex III, CIII) and cytochrome c oxidase (complex IV, CIV), that cooperate to transfer electrons derived from NADH and succinate to molecular oxygen, creating an electrochemical gradient over the inner membrane that drives transmembrane transport and the ATP synthase. Cytochrome c oxidase is the component of the respiratory chain that catalyzes the reduction of oxygen to water. Electrons originating from reduced cytochrome c in the intermembrane space (IMS) are transferred via the dinuclear copper A center (CU(A)) of subunit 2 and heme A of subunit 1 to the active site in subunit 1, a binuclear center (BNC) formed by heme A3 and copper B (CU(B)). The BNC reduces molecular oxygen to 2 water molecules using 4 electrons from cytochrome c in the IMS and 4 protons from the mitochondrial matrix.</text>
</comment>
<comment type="pathway">
    <text evidence="2">Energy metabolism; oxidative phosphorylation.</text>
</comment>
<comment type="subunit">
    <text evidence="1 4">Component of the cytochrome c oxidase (complex IV, CIV), a multisubunit enzyme composed of 14 subunits. The complex is composed of a catalytic core of 3 subunits MT-CO1, MT-CO2 and MT-CO3, encoded in the mitochondrial DNA, and 11 supernumerary subunits COX4I, COX5A, COX5B, COX6A, COX6B, COX6C, COX7A, COX7B, COX7C, COX8 and NDUFA4, which are encoded in the nuclear genome. The complex exists as a monomer or a dimer and forms supercomplexes (SCs) in the inner mitochondrial membrane with NADH-ubiquinone oxidoreductase (complex I, CI) and ubiquinol-cytochrome c oxidoreductase (cytochrome b-c1 complex, complex III, CIII), resulting in different assemblies (supercomplex SCI(1)III(2)IV(1) and megacomplex MCI(2)III(2)IV(2)) (By similarity). Interacts with AFG1L (By similarity). Interacts with RAB5IF (By similarity).</text>
</comment>
<comment type="subcellular location">
    <subcellularLocation>
        <location evidence="1">Mitochondrion inner membrane</location>
        <topology evidence="1">Peripheral membrane protein</topology>
        <orientation evidence="1">Matrix side</orientation>
    </subcellularLocation>
</comment>
<comment type="PTM">
    <text evidence="4">In response to mitochondrial stress, the precursor protein is ubiquitinated by the SIFI complex in the cytoplasm before mitochondrial import, leading to its degradation. Within the SIFI complex, UBR4 initiates ubiquitin chain that are further elongated or branched by KCMF1.</text>
</comment>
<comment type="similarity">
    <text evidence="5">Belongs to the cytochrome c oxidase subunit 5A family.</text>
</comment>
<organism>
    <name type="scientific">Plecturocebus donacophilus</name>
    <name type="common">Bolivian gray titi monkey</name>
    <name type="synonym">Callicebus donacophilus</name>
    <dbReference type="NCBI Taxonomy" id="230833"/>
    <lineage>
        <taxon>Eukaryota</taxon>
        <taxon>Metazoa</taxon>
        <taxon>Chordata</taxon>
        <taxon>Craniata</taxon>
        <taxon>Vertebrata</taxon>
        <taxon>Euteleostomi</taxon>
        <taxon>Mammalia</taxon>
        <taxon>Eutheria</taxon>
        <taxon>Euarchontoglires</taxon>
        <taxon>Primates</taxon>
        <taxon>Haplorrhini</taxon>
        <taxon>Platyrrhini</taxon>
        <taxon>Pitheciidae</taxon>
        <taxon>Callicebinae</taxon>
        <taxon>Plecturocebus</taxon>
    </lineage>
</organism>
<proteinExistence type="evidence at transcript level"/>
<name>COX5A_PLEDO</name>
<dbReference type="EMBL" id="DQ987248">
    <property type="protein sequence ID" value="ABK92295.1"/>
    <property type="molecule type" value="mRNA"/>
</dbReference>
<dbReference type="SMR" id="B0VYY1"/>
<dbReference type="UniPathway" id="UPA00705"/>
<dbReference type="GO" id="GO:0005743">
    <property type="term" value="C:mitochondrial inner membrane"/>
    <property type="evidence" value="ECO:0007669"/>
    <property type="project" value="UniProtKB-SubCell"/>
</dbReference>
<dbReference type="GO" id="GO:0045277">
    <property type="term" value="C:respiratory chain complex IV"/>
    <property type="evidence" value="ECO:0007669"/>
    <property type="project" value="InterPro"/>
</dbReference>
<dbReference type="GO" id="GO:0046872">
    <property type="term" value="F:metal ion binding"/>
    <property type="evidence" value="ECO:0007669"/>
    <property type="project" value="UniProtKB-KW"/>
</dbReference>
<dbReference type="GO" id="GO:0006123">
    <property type="term" value="P:mitochondrial electron transport, cytochrome c to oxygen"/>
    <property type="evidence" value="ECO:0007669"/>
    <property type="project" value="InterPro"/>
</dbReference>
<dbReference type="CDD" id="cd00923">
    <property type="entry name" value="Cyt_c_Oxidase_Va"/>
    <property type="match status" value="1"/>
</dbReference>
<dbReference type="FunFam" id="1.25.40.40:FF:000002">
    <property type="entry name" value="cytochrome c oxidase subunit 5A, mitochondrial"/>
    <property type="match status" value="1"/>
</dbReference>
<dbReference type="Gene3D" id="1.25.40.40">
    <property type="entry name" value="Cytochrome c oxidase, subunit Va/VI"/>
    <property type="match status" value="1"/>
</dbReference>
<dbReference type="InterPro" id="IPR003204">
    <property type="entry name" value="Cyt_c_oxidase_su5A/6"/>
</dbReference>
<dbReference type="InterPro" id="IPR036545">
    <property type="entry name" value="Cyt_c_oxidase_su5A/6_sf"/>
</dbReference>
<dbReference type="PANTHER" id="PTHR14200">
    <property type="entry name" value="CYTOCHROME C OXIDASE POLYPEPTIDE"/>
    <property type="match status" value="1"/>
</dbReference>
<dbReference type="PANTHER" id="PTHR14200:SF16">
    <property type="entry name" value="CYTOCHROME C OXIDASE SUBUNIT 5A, MITOCHONDRIAL"/>
    <property type="match status" value="1"/>
</dbReference>
<dbReference type="Pfam" id="PF02284">
    <property type="entry name" value="COX5A"/>
    <property type="match status" value="1"/>
</dbReference>
<dbReference type="SUPFAM" id="SSF48479">
    <property type="entry name" value="Cytochrome c oxidase subunit E"/>
    <property type="match status" value="1"/>
</dbReference>
<gene>
    <name type="primary">COX5A</name>
</gene>
<reference key="1">
    <citation type="journal article" date="2008" name="BMC Evol. Biol.">
        <title>Molecular evolution of the cytochrome c oxidase subunit 5A gene in primates.</title>
        <authorList>
            <person name="Uddin M."/>
            <person name="Opazo J.C."/>
            <person name="Wildman D.E."/>
            <person name="Sherwood C.C."/>
            <person name="Hof P.R."/>
            <person name="Goodman M."/>
            <person name="Grossman L.I."/>
        </authorList>
    </citation>
    <scope>NUCLEOTIDE SEQUENCE [MRNA]</scope>
</reference>
<sequence>MLGAALRRCAVAAAARAGPRGLLHSAPTPGPAAAIQSVRCYSHGSSETDEEFDARWVTYFNKPDIDAWELRKGINTLVTYDLVPEPKIIDAALRACRRLNDFASTVRILEAVKDKAGPHKEIYPYVIQELRPTLNELGISTPEELGLDKV</sequence>
<keyword id="KW-0007">Acetylation</keyword>
<keyword id="KW-0349">Heme</keyword>
<keyword id="KW-0408">Iron</keyword>
<keyword id="KW-0472">Membrane</keyword>
<keyword id="KW-0479">Metal-binding</keyword>
<keyword id="KW-0496">Mitochondrion</keyword>
<keyword id="KW-0999">Mitochondrion inner membrane</keyword>
<keyword id="KW-0597">Phosphoprotein</keyword>
<keyword id="KW-0809">Transit peptide</keyword>
<keyword id="KW-0832">Ubl conjugation</keyword>